<sequence>MSTENTLSVADLARENVRNLVPYQSARRLGGNGDVWLNANEFPTAVEFQLTQQTLNRYPECQPKAVIENYAQYAGVKPEQVLVSRGADEGIELVIRAFCEPGKDAILYCPPTYGMYSVSAETIGVERRTVPALENWQLDLQGISDNLDGTKVVFVCSPNNPTGQLINPQDLRTLLELTRGKAIVVADEAYIEFCPQATLTGWLVEYPHLVILRTLSKAFALAGLRCGFTLANEEVINLLLKVIAPYPLSTPVADIAAQALSPQGINAMRDRVAQTVQERQYLVNALQQTACVEHVFDSETNYILARFTASSSVFKSLWDQGIILRDQNKQPSLSGCLRITVGTRQENQRVIDALRAEPV</sequence>
<comment type="catalytic activity">
    <reaction evidence="1">
        <text>L-histidinol phosphate + 2-oxoglutarate = 3-(imidazol-4-yl)-2-oxopropyl phosphate + L-glutamate</text>
        <dbReference type="Rhea" id="RHEA:23744"/>
        <dbReference type="ChEBI" id="CHEBI:16810"/>
        <dbReference type="ChEBI" id="CHEBI:29985"/>
        <dbReference type="ChEBI" id="CHEBI:57766"/>
        <dbReference type="ChEBI" id="CHEBI:57980"/>
        <dbReference type="EC" id="2.6.1.9"/>
    </reaction>
</comment>
<comment type="cofactor">
    <cofactor evidence="1">
        <name>pyridoxal 5'-phosphate</name>
        <dbReference type="ChEBI" id="CHEBI:597326"/>
    </cofactor>
</comment>
<comment type="pathway">
    <text evidence="1">Amino-acid biosynthesis; L-histidine biosynthesis; L-histidine from 5-phospho-alpha-D-ribose 1-diphosphate: step 7/9.</text>
</comment>
<comment type="subunit">
    <text evidence="1">Homodimer.</text>
</comment>
<comment type="similarity">
    <text evidence="1">Belongs to the class-II pyridoxal-phosphate-dependent aminotransferase family. Histidinol-phosphate aminotransferase subfamily.</text>
</comment>
<keyword id="KW-0028">Amino-acid biosynthesis</keyword>
<keyword id="KW-0032">Aminotransferase</keyword>
<keyword id="KW-0368">Histidine biosynthesis</keyword>
<keyword id="KW-0663">Pyridoxal phosphate</keyword>
<keyword id="KW-0808">Transferase</keyword>
<evidence type="ECO:0000255" key="1">
    <source>
        <dbReference type="HAMAP-Rule" id="MF_01023"/>
    </source>
</evidence>
<proteinExistence type="inferred from homology"/>
<protein>
    <recommendedName>
        <fullName evidence="1">Histidinol-phosphate aminotransferase</fullName>
        <ecNumber evidence="1">2.6.1.9</ecNumber>
    </recommendedName>
    <alternativeName>
        <fullName evidence="1">Imidazole acetol-phosphate transaminase</fullName>
    </alternativeName>
</protein>
<feature type="chain" id="PRO_1000135416" description="Histidinol-phosphate aminotransferase">
    <location>
        <begin position="1"/>
        <end position="359"/>
    </location>
</feature>
<feature type="modified residue" description="N6-(pyridoxal phosphate)lysine" evidence="1">
    <location>
        <position position="217"/>
    </location>
</feature>
<name>HIS8_SALA4</name>
<reference key="1">
    <citation type="journal article" date="2011" name="J. Bacteriol.">
        <title>Comparative genomics of 28 Salmonella enterica isolates: evidence for CRISPR-mediated adaptive sublineage evolution.</title>
        <authorList>
            <person name="Fricke W.F."/>
            <person name="Mammel M.K."/>
            <person name="McDermott P.F."/>
            <person name="Tartera C."/>
            <person name="White D.G."/>
            <person name="Leclerc J.E."/>
            <person name="Ravel J."/>
            <person name="Cebula T.A."/>
        </authorList>
    </citation>
    <scope>NUCLEOTIDE SEQUENCE [LARGE SCALE GENOMIC DNA]</scope>
    <source>
        <strain>SL483</strain>
    </source>
</reference>
<dbReference type="EC" id="2.6.1.9" evidence="1"/>
<dbReference type="EMBL" id="CP001138">
    <property type="protein sequence ID" value="ACH50884.1"/>
    <property type="molecule type" value="Genomic_DNA"/>
</dbReference>
<dbReference type="RefSeq" id="WP_000102715.1">
    <property type="nucleotide sequence ID" value="NC_011149.1"/>
</dbReference>
<dbReference type="SMR" id="B5EX40"/>
<dbReference type="KEGG" id="sea:SeAg_B2198"/>
<dbReference type="HOGENOM" id="CLU_017584_3_1_6"/>
<dbReference type="UniPathway" id="UPA00031">
    <property type="reaction ID" value="UER00012"/>
</dbReference>
<dbReference type="Proteomes" id="UP000008819">
    <property type="component" value="Chromosome"/>
</dbReference>
<dbReference type="GO" id="GO:0004400">
    <property type="term" value="F:histidinol-phosphate transaminase activity"/>
    <property type="evidence" value="ECO:0007669"/>
    <property type="project" value="UniProtKB-UniRule"/>
</dbReference>
<dbReference type="GO" id="GO:0030170">
    <property type="term" value="F:pyridoxal phosphate binding"/>
    <property type="evidence" value="ECO:0007669"/>
    <property type="project" value="InterPro"/>
</dbReference>
<dbReference type="GO" id="GO:0000105">
    <property type="term" value="P:L-histidine biosynthetic process"/>
    <property type="evidence" value="ECO:0007669"/>
    <property type="project" value="UniProtKB-UniRule"/>
</dbReference>
<dbReference type="CDD" id="cd00609">
    <property type="entry name" value="AAT_like"/>
    <property type="match status" value="1"/>
</dbReference>
<dbReference type="FunFam" id="3.40.640.10:FF:000032">
    <property type="entry name" value="Histidinol-phosphate aminotransferase"/>
    <property type="match status" value="1"/>
</dbReference>
<dbReference type="Gene3D" id="3.90.1150.10">
    <property type="entry name" value="Aspartate Aminotransferase, domain 1"/>
    <property type="match status" value="1"/>
</dbReference>
<dbReference type="Gene3D" id="3.40.640.10">
    <property type="entry name" value="Type I PLP-dependent aspartate aminotransferase-like (Major domain)"/>
    <property type="match status" value="1"/>
</dbReference>
<dbReference type="HAMAP" id="MF_01023">
    <property type="entry name" value="HisC_aminotrans_2"/>
    <property type="match status" value="1"/>
</dbReference>
<dbReference type="InterPro" id="IPR001917">
    <property type="entry name" value="Aminotrans_II_pyridoxalP_BS"/>
</dbReference>
<dbReference type="InterPro" id="IPR004839">
    <property type="entry name" value="Aminotransferase_I/II_large"/>
</dbReference>
<dbReference type="InterPro" id="IPR005861">
    <property type="entry name" value="HisP_aminotrans"/>
</dbReference>
<dbReference type="InterPro" id="IPR015424">
    <property type="entry name" value="PyrdxlP-dep_Trfase"/>
</dbReference>
<dbReference type="InterPro" id="IPR015421">
    <property type="entry name" value="PyrdxlP-dep_Trfase_major"/>
</dbReference>
<dbReference type="InterPro" id="IPR015422">
    <property type="entry name" value="PyrdxlP-dep_Trfase_small"/>
</dbReference>
<dbReference type="NCBIfam" id="TIGR01141">
    <property type="entry name" value="hisC"/>
    <property type="match status" value="1"/>
</dbReference>
<dbReference type="PANTHER" id="PTHR42885:SF2">
    <property type="entry name" value="HISTIDINOL-PHOSPHATE AMINOTRANSFERASE"/>
    <property type="match status" value="1"/>
</dbReference>
<dbReference type="PANTHER" id="PTHR42885">
    <property type="entry name" value="HISTIDINOL-PHOSPHATE AMINOTRANSFERASE-RELATED"/>
    <property type="match status" value="1"/>
</dbReference>
<dbReference type="Pfam" id="PF00155">
    <property type="entry name" value="Aminotran_1_2"/>
    <property type="match status" value="1"/>
</dbReference>
<dbReference type="SUPFAM" id="SSF53383">
    <property type="entry name" value="PLP-dependent transferases"/>
    <property type="match status" value="1"/>
</dbReference>
<dbReference type="PROSITE" id="PS00599">
    <property type="entry name" value="AA_TRANSFER_CLASS_2"/>
    <property type="match status" value="1"/>
</dbReference>
<accession>B5EX40</accession>
<organism>
    <name type="scientific">Salmonella agona (strain SL483)</name>
    <dbReference type="NCBI Taxonomy" id="454166"/>
    <lineage>
        <taxon>Bacteria</taxon>
        <taxon>Pseudomonadati</taxon>
        <taxon>Pseudomonadota</taxon>
        <taxon>Gammaproteobacteria</taxon>
        <taxon>Enterobacterales</taxon>
        <taxon>Enterobacteriaceae</taxon>
        <taxon>Salmonella</taxon>
    </lineage>
</organism>
<gene>
    <name evidence="1" type="primary">hisC</name>
    <name type="ordered locus">SeAg_B2198</name>
</gene>